<reference key="1">
    <citation type="journal article" date="2008" name="Genome Res.">
        <title>Insights from the complete genome sequence of Mycobacterium marinum on the evolution of Mycobacterium tuberculosis.</title>
        <authorList>
            <person name="Stinear T.P."/>
            <person name="Seemann T."/>
            <person name="Harrison P.F."/>
            <person name="Jenkin G.A."/>
            <person name="Davies J.K."/>
            <person name="Johnson P.D."/>
            <person name="Abdellah Z."/>
            <person name="Arrowsmith C."/>
            <person name="Chillingworth T."/>
            <person name="Churcher C."/>
            <person name="Clarke K."/>
            <person name="Cronin A."/>
            <person name="Davis P."/>
            <person name="Goodhead I."/>
            <person name="Holroyd N."/>
            <person name="Jagels K."/>
            <person name="Lord A."/>
            <person name="Moule S."/>
            <person name="Mungall K."/>
            <person name="Norbertczak H."/>
            <person name="Quail M.A."/>
            <person name="Rabbinowitsch E."/>
            <person name="Walker D."/>
            <person name="White B."/>
            <person name="Whitehead S."/>
            <person name="Small P.L."/>
            <person name="Brosch R."/>
            <person name="Ramakrishnan L."/>
            <person name="Fischbach M.A."/>
            <person name="Parkhill J."/>
            <person name="Cole S.T."/>
        </authorList>
    </citation>
    <scope>NUCLEOTIDE SEQUENCE [LARGE SCALE GENOMIC DNA]</scope>
    <source>
        <strain>ATCC BAA-535 / M</strain>
    </source>
</reference>
<organism>
    <name type="scientific">Mycobacterium marinum (strain ATCC BAA-535 / M)</name>
    <dbReference type="NCBI Taxonomy" id="216594"/>
    <lineage>
        <taxon>Bacteria</taxon>
        <taxon>Bacillati</taxon>
        <taxon>Actinomycetota</taxon>
        <taxon>Actinomycetes</taxon>
        <taxon>Mycobacteriales</taxon>
        <taxon>Mycobacteriaceae</taxon>
        <taxon>Mycobacterium</taxon>
        <taxon>Mycobacterium ulcerans group</taxon>
    </lineage>
</organism>
<comment type="catalytic activity">
    <reaction evidence="1">
        <text>(S)-4-hydroxy-2-oxopentanoate = acetaldehyde + pyruvate</text>
        <dbReference type="Rhea" id="RHEA:22624"/>
        <dbReference type="ChEBI" id="CHEBI:15343"/>
        <dbReference type="ChEBI" id="CHEBI:15361"/>
        <dbReference type="ChEBI" id="CHEBI:73143"/>
        <dbReference type="EC" id="4.1.3.39"/>
    </reaction>
</comment>
<comment type="similarity">
    <text evidence="1">Belongs to the 4-hydroxy-2-oxovalerate aldolase family.</text>
</comment>
<accession>B2HI25</accession>
<protein>
    <recommendedName>
        <fullName evidence="1">4-hydroxy-2-oxovalerate aldolase 2</fullName>
        <shortName evidence="1">HOA 2</shortName>
        <ecNumber evidence="1">4.1.3.39</ecNumber>
    </recommendedName>
    <alternativeName>
        <fullName evidence="1">4-hydroxy-2-keto-pentanoic acid aldolase 2</fullName>
    </alternativeName>
    <alternativeName>
        <fullName evidence="1">4-hydroxy-2-oxopentanoate aldolase 2</fullName>
    </alternativeName>
</protein>
<name>HOA2_MYCMM</name>
<proteinExistence type="inferred from homology"/>
<dbReference type="EC" id="4.1.3.39" evidence="1"/>
<dbReference type="EMBL" id="CP000854">
    <property type="protein sequence ID" value="ACC43425.1"/>
    <property type="molecule type" value="Genomic_DNA"/>
</dbReference>
<dbReference type="RefSeq" id="WP_012396545.1">
    <property type="nucleotide sequence ID" value="NC_010612.1"/>
</dbReference>
<dbReference type="SMR" id="B2HI25"/>
<dbReference type="STRING" id="216594.MMAR_5021"/>
<dbReference type="GeneID" id="34340090"/>
<dbReference type="KEGG" id="mmi:MMAR_5021"/>
<dbReference type="eggNOG" id="COG0119">
    <property type="taxonomic scope" value="Bacteria"/>
</dbReference>
<dbReference type="HOGENOM" id="CLU_049173_0_0_11"/>
<dbReference type="OrthoDB" id="9803573at2"/>
<dbReference type="Proteomes" id="UP000001190">
    <property type="component" value="Chromosome"/>
</dbReference>
<dbReference type="GO" id="GO:0003852">
    <property type="term" value="F:2-isopropylmalate synthase activity"/>
    <property type="evidence" value="ECO:0007669"/>
    <property type="project" value="TreeGrafter"/>
</dbReference>
<dbReference type="GO" id="GO:0008701">
    <property type="term" value="F:4-hydroxy-2-oxovalerate aldolase activity"/>
    <property type="evidence" value="ECO:0007669"/>
    <property type="project" value="UniProtKB-UniRule"/>
</dbReference>
<dbReference type="GO" id="GO:0030145">
    <property type="term" value="F:manganese ion binding"/>
    <property type="evidence" value="ECO:0007669"/>
    <property type="project" value="UniProtKB-UniRule"/>
</dbReference>
<dbReference type="GO" id="GO:0009056">
    <property type="term" value="P:catabolic process"/>
    <property type="evidence" value="ECO:0007669"/>
    <property type="project" value="UniProtKB-KW"/>
</dbReference>
<dbReference type="GO" id="GO:0009098">
    <property type="term" value="P:L-leucine biosynthetic process"/>
    <property type="evidence" value="ECO:0007669"/>
    <property type="project" value="TreeGrafter"/>
</dbReference>
<dbReference type="CDD" id="cd07943">
    <property type="entry name" value="DRE_TIM_HOA"/>
    <property type="match status" value="1"/>
</dbReference>
<dbReference type="FunFam" id="1.10.8.60:FF:000042">
    <property type="entry name" value="4-hydroxy-2-oxovalerate aldolase"/>
    <property type="match status" value="1"/>
</dbReference>
<dbReference type="FunFam" id="3.20.20.70:FF:000072">
    <property type="entry name" value="4-hydroxy-2-oxovalerate aldolase"/>
    <property type="match status" value="1"/>
</dbReference>
<dbReference type="Gene3D" id="1.10.8.60">
    <property type="match status" value="1"/>
</dbReference>
<dbReference type="Gene3D" id="3.20.20.70">
    <property type="entry name" value="Aldolase class I"/>
    <property type="match status" value="1"/>
</dbReference>
<dbReference type="HAMAP" id="MF_01656">
    <property type="entry name" value="HOA"/>
    <property type="match status" value="1"/>
</dbReference>
<dbReference type="InterPro" id="IPR050073">
    <property type="entry name" value="2-IPM_HCS-like"/>
</dbReference>
<dbReference type="InterPro" id="IPR017629">
    <property type="entry name" value="4OH_2_O-val_aldolase"/>
</dbReference>
<dbReference type="InterPro" id="IPR013785">
    <property type="entry name" value="Aldolase_TIM"/>
</dbReference>
<dbReference type="InterPro" id="IPR012425">
    <property type="entry name" value="DmpG_comm"/>
</dbReference>
<dbReference type="InterPro" id="IPR035685">
    <property type="entry name" value="DRE_TIM_HOA"/>
</dbReference>
<dbReference type="InterPro" id="IPR000891">
    <property type="entry name" value="PYR_CT"/>
</dbReference>
<dbReference type="NCBIfam" id="TIGR03217">
    <property type="entry name" value="4OH_2_O_val_ald"/>
    <property type="match status" value="1"/>
</dbReference>
<dbReference type="NCBIfam" id="NF006049">
    <property type="entry name" value="PRK08195.1"/>
    <property type="match status" value="1"/>
</dbReference>
<dbReference type="PANTHER" id="PTHR10277:SF9">
    <property type="entry name" value="2-ISOPROPYLMALATE SYNTHASE 1, CHLOROPLASTIC-RELATED"/>
    <property type="match status" value="1"/>
</dbReference>
<dbReference type="PANTHER" id="PTHR10277">
    <property type="entry name" value="HOMOCITRATE SYNTHASE-RELATED"/>
    <property type="match status" value="1"/>
</dbReference>
<dbReference type="Pfam" id="PF07836">
    <property type="entry name" value="DmpG_comm"/>
    <property type="match status" value="1"/>
</dbReference>
<dbReference type="Pfam" id="PF00682">
    <property type="entry name" value="HMGL-like"/>
    <property type="match status" value="1"/>
</dbReference>
<dbReference type="SUPFAM" id="SSF51569">
    <property type="entry name" value="Aldolase"/>
    <property type="match status" value="1"/>
</dbReference>
<dbReference type="SUPFAM" id="SSF89000">
    <property type="entry name" value="post-HMGL domain-like"/>
    <property type="match status" value="1"/>
</dbReference>
<dbReference type="PROSITE" id="PS50991">
    <property type="entry name" value="PYR_CT"/>
    <property type="match status" value="1"/>
</dbReference>
<sequence length="347" mass="36816">MTGIWDVRITDTSLRDGSHHKRHQFIKEEVGAIVAALDAAGVPVIEVTHGDGLGGSSFNYGFSKTPEQELIKLAAQTAKEAKIAFLMLPGVGTKEDIKEAQDNGGSICRIATHCTEADVSIQHFGLARELGLETVGFLMMAHTIAPEKLAAQARIMADAGCQCVYVVDSAGALVLDGVADRVAALVAELGEDAQVGFHGHENLGLGVANSVEAVRAGAKQIDGSVRRFGAGAGNAPVEALIGVFDKIGVKTGIDFFDIADAAEDVVRPAMPAECLLDRNALIMGYSGVYSSFLKHAVRQSERYGVPAHQLLHRAGQRKLIGGQEDQLIDIALEIKREQESGQVASRR</sequence>
<keyword id="KW-0058">Aromatic hydrocarbons catabolism</keyword>
<keyword id="KW-0456">Lyase</keyword>
<keyword id="KW-0464">Manganese</keyword>
<keyword id="KW-0479">Metal-binding</keyword>
<keyword id="KW-1185">Reference proteome</keyword>
<evidence type="ECO:0000255" key="1">
    <source>
        <dbReference type="HAMAP-Rule" id="MF_01656"/>
    </source>
</evidence>
<feature type="chain" id="PRO_0000387852" description="4-hydroxy-2-oxovalerate aldolase 2">
    <location>
        <begin position="1"/>
        <end position="347"/>
    </location>
</feature>
<feature type="domain" description="Pyruvate carboxyltransferase" evidence="1">
    <location>
        <begin position="7"/>
        <end position="259"/>
    </location>
</feature>
<feature type="active site" description="Proton acceptor" evidence="1">
    <location>
        <position position="19"/>
    </location>
</feature>
<feature type="binding site" evidence="1">
    <location>
        <begin position="15"/>
        <end position="16"/>
    </location>
    <ligand>
        <name>substrate</name>
    </ligand>
</feature>
<feature type="binding site" evidence="1">
    <location>
        <position position="16"/>
    </location>
    <ligand>
        <name>Mn(2+)</name>
        <dbReference type="ChEBI" id="CHEBI:29035"/>
    </ligand>
</feature>
<feature type="binding site" evidence="1">
    <location>
        <position position="169"/>
    </location>
    <ligand>
        <name>substrate</name>
    </ligand>
</feature>
<feature type="binding site" evidence="1">
    <location>
        <position position="198"/>
    </location>
    <ligand>
        <name>Mn(2+)</name>
        <dbReference type="ChEBI" id="CHEBI:29035"/>
    </ligand>
</feature>
<feature type="binding site" evidence="1">
    <location>
        <position position="198"/>
    </location>
    <ligand>
        <name>substrate</name>
    </ligand>
</feature>
<feature type="binding site" evidence="1">
    <location>
        <position position="200"/>
    </location>
    <ligand>
        <name>Mn(2+)</name>
        <dbReference type="ChEBI" id="CHEBI:29035"/>
    </ligand>
</feature>
<feature type="binding site" evidence="1">
    <location>
        <position position="289"/>
    </location>
    <ligand>
        <name>substrate</name>
    </ligand>
</feature>
<feature type="site" description="Transition state stabilizer" evidence="1">
    <location>
        <position position="15"/>
    </location>
</feature>
<gene>
    <name type="ordered locus">MMAR_5021</name>
</gene>